<organism>
    <name type="scientific">Lactococcus lactis subsp. cremoris (strain SK11)</name>
    <dbReference type="NCBI Taxonomy" id="272622"/>
    <lineage>
        <taxon>Bacteria</taxon>
        <taxon>Bacillati</taxon>
        <taxon>Bacillota</taxon>
        <taxon>Bacilli</taxon>
        <taxon>Lactobacillales</taxon>
        <taxon>Streptococcaceae</taxon>
        <taxon>Lactococcus</taxon>
        <taxon>Lactococcus cremoris subsp. cremoris</taxon>
    </lineage>
</organism>
<name>ADDB_LACLS</name>
<accession>Q033I2</accession>
<proteinExistence type="inferred from homology"/>
<evidence type="ECO:0000255" key="1">
    <source>
        <dbReference type="HAMAP-Rule" id="MF_01453"/>
    </source>
</evidence>
<gene>
    <name evidence="1" type="primary">rexB</name>
    <name type="ordered locus">LACR_0003</name>
</gene>
<keyword id="KW-0004">4Fe-4S</keyword>
<keyword id="KW-0067">ATP-binding</keyword>
<keyword id="KW-0227">DNA damage</keyword>
<keyword id="KW-0234">DNA repair</keyword>
<keyword id="KW-0238">DNA-binding</keyword>
<keyword id="KW-0269">Exonuclease</keyword>
<keyword id="KW-0347">Helicase</keyword>
<keyword id="KW-0378">Hydrolase</keyword>
<keyword id="KW-0408">Iron</keyword>
<keyword id="KW-0411">Iron-sulfur</keyword>
<keyword id="KW-0479">Metal-binding</keyword>
<keyword id="KW-0540">Nuclease</keyword>
<keyword id="KW-0547">Nucleotide-binding</keyword>
<sequence length="1099" mass="127317">MEILYTEITQDLTEGLLEIALEELEKNRKVYYIVPSSMSFEKEKEILERLAKGSDTAVFYLLVTRFKQLPYYFDKREKATMKTELGTVGLSMLFRRILRSFKKDEIPLYFSLQDSAGFLEMLIQLRAELLTANLSVENLPDNPKNQELKKILTTFEAELSVEYANYSEFGDFTNRLADGEFDQQLKDVTIIIDGYTRFSAEEELFIESIQEKVARFVVGTYSDENSLTAGSETIYVGTSQMITRFRNKYPVELRKIASSSVNEVYSKLTRMLDLDSRFVITDEKIELKAEDEKYFRIWEAENQKVEIERVAKEIRQKISQGAFFKDFTVLVGDPAAYEITLKEIFDLYEIPFFYAQEESMSQHPLVIFFESLFAIKKNNYRTDDVVNLLKSKVYTDVNLDEEVIDYFEYYVQKYKISGRKKFTEEFIESEFSQIELVNEMREKLLGSESPLQVFLGNNRQKTGKKWVSDLQALLENGNVMANMNAYFSAAELQNEHQMADKHEQVWQMLISTLNEFFAVFSDEKLKSVEFLDILLAGLKNAKYRQIPANVDVVNVKDYELVEPKTNNYIYAIGLSQTNFPRIKKNSTLLSDEERLEINQTTDENQFIEQLNVANYQKNQFTVLSLINSAKESLVLSMPQIMTNEQGEFSPVFQLFLKDADEKILQKIQGVNLFESLEHIGNSRSVIAMIGQIERELVESEETNEDKRVFWSSIFRILVKSNADFQKILLDLAKDIDTVNLAPDTLEQIYGDKIYASVSSFERFYNCEYQYFLENTLSLETFENIDINSKIVGNFFHEVFEKVMKETDLSAENFDEKLTLFLQEVDKNYSRYFTQDATARFTWSNLEEIVRQTATVLKATVSTDELKTLLTESSFGLSKSELGNFSVDDIYLRGRIDRLDQLSTDYLGVIDYKSSAHSFKLQEAYDGLSLQFMTYLDVIKQAFPNQKIWGALYLQFKNQPINLSEINQLSEIANILKESMRYDGLVLEDAAEQIKGIENIALKNTNSYNEEEFEQLLKLNEEHYRAAGQRLKNGKIAINPIMKRSEGIDQSGNVRGCRYCPLKSICRFEANIHMNEHSREIGQKSQAEILAELKGEGRDE</sequence>
<reference key="1">
    <citation type="journal article" date="2006" name="Proc. Natl. Acad. Sci. U.S.A.">
        <title>Comparative genomics of the lactic acid bacteria.</title>
        <authorList>
            <person name="Makarova K.S."/>
            <person name="Slesarev A."/>
            <person name="Wolf Y.I."/>
            <person name="Sorokin A."/>
            <person name="Mirkin B."/>
            <person name="Koonin E.V."/>
            <person name="Pavlov A."/>
            <person name="Pavlova N."/>
            <person name="Karamychev V."/>
            <person name="Polouchine N."/>
            <person name="Shakhova V."/>
            <person name="Grigoriev I."/>
            <person name="Lou Y."/>
            <person name="Rohksar D."/>
            <person name="Lucas S."/>
            <person name="Huang K."/>
            <person name="Goodstein D.M."/>
            <person name="Hawkins T."/>
            <person name="Plengvidhya V."/>
            <person name="Welker D."/>
            <person name="Hughes J."/>
            <person name="Goh Y."/>
            <person name="Benson A."/>
            <person name="Baldwin K."/>
            <person name="Lee J.-H."/>
            <person name="Diaz-Muniz I."/>
            <person name="Dosti B."/>
            <person name="Smeianov V."/>
            <person name="Wechter W."/>
            <person name="Barabote R."/>
            <person name="Lorca G."/>
            <person name="Altermann E."/>
            <person name="Barrangou R."/>
            <person name="Ganesan B."/>
            <person name="Xie Y."/>
            <person name="Rawsthorne H."/>
            <person name="Tamir D."/>
            <person name="Parker C."/>
            <person name="Breidt F."/>
            <person name="Broadbent J.R."/>
            <person name="Hutkins R."/>
            <person name="O'Sullivan D."/>
            <person name="Steele J."/>
            <person name="Unlu G."/>
            <person name="Saier M.H. Jr."/>
            <person name="Klaenhammer T."/>
            <person name="Richardson P."/>
            <person name="Kozyavkin S."/>
            <person name="Weimer B.C."/>
            <person name="Mills D.A."/>
        </authorList>
    </citation>
    <scope>NUCLEOTIDE SEQUENCE [LARGE SCALE GENOMIC DNA]</scope>
    <source>
        <strain>SK11</strain>
    </source>
</reference>
<comment type="function">
    <text evidence="1">The heterodimer acts as both an ATP-dependent DNA helicase and an ATP-dependent, dual-direction single-stranded exonuclease. Recognizes the chi site generating a DNA molecule suitable for the initiation of homologous recombination. This subunit has 5' -&gt; 3' nuclease activity but not helicase activity.</text>
</comment>
<comment type="cofactor">
    <cofactor evidence="1">
        <name>Mg(2+)</name>
        <dbReference type="ChEBI" id="CHEBI:18420"/>
    </cofactor>
</comment>
<comment type="cofactor">
    <cofactor evidence="1">
        <name>[4Fe-4S] cluster</name>
        <dbReference type="ChEBI" id="CHEBI:49883"/>
    </cofactor>
    <text evidence="1">Binds 1 [4Fe-4S] cluster.</text>
</comment>
<comment type="subunit">
    <text evidence="1">Heterodimer of AddA and RexB.</text>
</comment>
<comment type="miscellaneous">
    <text evidence="1">Despite having helicase-like domains, this subunit does not have helicase activity.</text>
</comment>
<comment type="similarity">
    <text evidence="1">Belongs to the helicase family. AddB/RexB type 2 subfamily.</text>
</comment>
<protein>
    <recommendedName>
        <fullName evidence="1">ATP-dependent helicase/deoxyribonuclease subunit B</fullName>
        <ecNumber evidence="1">3.1.-.-</ecNumber>
    </recommendedName>
    <alternativeName>
        <fullName evidence="1">ATP-dependent helicase/nuclease subunit RexB</fullName>
    </alternativeName>
</protein>
<dbReference type="EC" id="3.1.-.-" evidence="1"/>
<dbReference type="EMBL" id="CP000425">
    <property type="protein sequence ID" value="ABJ71640.1"/>
    <property type="molecule type" value="Genomic_DNA"/>
</dbReference>
<dbReference type="RefSeq" id="WP_011675080.1">
    <property type="nucleotide sequence ID" value="NC_008527.1"/>
</dbReference>
<dbReference type="SMR" id="Q033I2"/>
<dbReference type="KEGG" id="llc:LACR_0003"/>
<dbReference type="HOGENOM" id="CLU_007838_0_0_9"/>
<dbReference type="Proteomes" id="UP000000240">
    <property type="component" value="Chromosome"/>
</dbReference>
<dbReference type="GO" id="GO:0051539">
    <property type="term" value="F:4 iron, 4 sulfur cluster binding"/>
    <property type="evidence" value="ECO:0007669"/>
    <property type="project" value="UniProtKB-KW"/>
</dbReference>
<dbReference type="GO" id="GO:0008409">
    <property type="term" value="F:5'-3' exonuclease activity"/>
    <property type="evidence" value="ECO:0007669"/>
    <property type="project" value="UniProtKB-UniRule"/>
</dbReference>
<dbReference type="GO" id="GO:0005524">
    <property type="term" value="F:ATP binding"/>
    <property type="evidence" value="ECO:0007669"/>
    <property type="project" value="UniProtKB-UniRule"/>
</dbReference>
<dbReference type="GO" id="GO:0003690">
    <property type="term" value="F:double-stranded DNA binding"/>
    <property type="evidence" value="ECO:0007669"/>
    <property type="project" value="UniProtKB-UniRule"/>
</dbReference>
<dbReference type="GO" id="GO:0004386">
    <property type="term" value="F:helicase activity"/>
    <property type="evidence" value="ECO:0007669"/>
    <property type="project" value="UniProtKB-KW"/>
</dbReference>
<dbReference type="GO" id="GO:0016817">
    <property type="term" value="F:hydrolase activity, acting on acid anhydrides"/>
    <property type="evidence" value="ECO:0007669"/>
    <property type="project" value="InterPro"/>
</dbReference>
<dbReference type="GO" id="GO:0046872">
    <property type="term" value="F:metal ion binding"/>
    <property type="evidence" value="ECO:0007669"/>
    <property type="project" value="UniProtKB-KW"/>
</dbReference>
<dbReference type="GO" id="GO:0000724">
    <property type="term" value="P:double-strand break repair via homologous recombination"/>
    <property type="evidence" value="ECO:0007669"/>
    <property type="project" value="UniProtKB-UniRule"/>
</dbReference>
<dbReference type="Gene3D" id="3.90.320.10">
    <property type="match status" value="1"/>
</dbReference>
<dbReference type="Gene3D" id="3.40.50.300">
    <property type="entry name" value="P-loop containing nucleotide triphosphate hydrolases"/>
    <property type="match status" value="3"/>
</dbReference>
<dbReference type="HAMAP" id="MF_01453">
    <property type="entry name" value="AddB_type2"/>
    <property type="match status" value="1"/>
</dbReference>
<dbReference type="InterPro" id="IPR049035">
    <property type="entry name" value="ADDB_N"/>
</dbReference>
<dbReference type="InterPro" id="IPR014141">
    <property type="entry name" value="DNA_helicase_suRexB"/>
</dbReference>
<dbReference type="InterPro" id="IPR027417">
    <property type="entry name" value="P-loop_NTPase"/>
</dbReference>
<dbReference type="InterPro" id="IPR011604">
    <property type="entry name" value="PDDEXK-like_dom_sf"/>
</dbReference>
<dbReference type="InterPro" id="IPR038726">
    <property type="entry name" value="PDDEXK_AddAB-type"/>
</dbReference>
<dbReference type="NCBIfam" id="TIGR02774">
    <property type="entry name" value="rexB_recomb"/>
    <property type="match status" value="1"/>
</dbReference>
<dbReference type="PANTHER" id="PTHR30591">
    <property type="entry name" value="RECBCD ENZYME SUBUNIT RECC"/>
    <property type="match status" value="1"/>
</dbReference>
<dbReference type="PANTHER" id="PTHR30591:SF1">
    <property type="entry name" value="RECBCD ENZYME SUBUNIT RECC"/>
    <property type="match status" value="1"/>
</dbReference>
<dbReference type="Pfam" id="PF21445">
    <property type="entry name" value="ADDB_N"/>
    <property type="match status" value="1"/>
</dbReference>
<dbReference type="Pfam" id="PF12705">
    <property type="entry name" value="PDDEXK_1"/>
    <property type="match status" value="1"/>
</dbReference>
<dbReference type="SUPFAM" id="SSF52540">
    <property type="entry name" value="P-loop containing nucleoside triphosphate hydrolases"/>
    <property type="match status" value="1"/>
</dbReference>
<feature type="chain" id="PRO_0000379381" description="ATP-dependent helicase/deoxyribonuclease subunit B">
    <location>
        <begin position="1"/>
        <end position="1099"/>
    </location>
</feature>
<feature type="binding site" evidence="1">
    <location>
        <position position="766"/>
    </location>
    <ligand>
        <name>[4Fe-4S] cluster</name>
        <dbReference type="ChEBI" id="CHEBI:49883"/>
    </ligand>
</feature>
<feature type="binding site" evidence="1">
    <location>
        <position position="1056"/>
    </location>
    <ligand>
        <name>[4Fe-4S] cluster</name>
        <dbReference type="ChEBI" id="CHEBI:49883"/>
    </ligand>
</feature>
<feature type="binding site" evidence="1">
    <location>
        <position position="1059"/>
    </location>
    <ligand>
        <name>[4Fe-4S] cluster</name>
        <dbReference type="ChEBI" id="CHEBI:49883"/>
    </ligand>
</feature>
<feature type="binding site" evidence="1">
    <location>
        <position position="1065"/>
    </location>
    <ligand>
        <name>[4Fe-4S] cluster</name>
        <dbReference type="ChEBI" id="CHEBI:49883"/>
    </ligand>
</feature>